<name>EIF3H_XENTR</name>
<reference key="1">
    <citation type="submission" date="2003-12" db="EMBL/GenBank/DDBJ databases">
        <authorList>
            <consortium name="NIH - Xenopus Gene Collection (XGC) project"/>
        </authorList>
    </citation>
    <scope>NUCLEOTIDE SEQUENCE [LARGE SCALE MRNA]</scope>
    <source>
        <tissue>Embryo</tissue>
    </source>
</reference>
<gene>
    <name type="primary">eif3h</name>
    <name type="synonym">eif3s3</name>
</gene>
<keyword id="KW-0963">Cytoplasm</keyword>
<keyword id="KW-0396">Initiation factor</keyword>
<keyword id="KW-0648">Protein biosynthesis</keyword>
<keyword id="KW-1185">Reference proteome</keyword>
<proteinExistence type="evidence at transcript level"/>
<protein>
    <recommendedName>
        <fullName evidence="1">Eukaryotic translation initiation factor 3 subunit H</fullName>
        <shortName evidence="1">eIF3h</shortName>
    </recommendedName>
    <alternativeName>
        <fullName evidence="1">Eukaryotic translation initiation factor 3 subunit 3</fullName>
    </alternativeName>
    <alternativeName>
        <fullName>eIF-3-gamma</fullName>
    </alternativeName>
    <alternativeName>
        <fullName evidence="1">eIF3 p40 subunit</fullName>
    </alternativeName>
</protein>
<accession>Q6P381</accession>
<evidence type="ECO:0000255" key="1">
    <source>
        <dbReference type="HAMAP-Rule" id="MF_03007"/>
    </source>
</evidence>
<evidence type="ECO:0000255" key="2">
    <source>
        <dbReference type="PROSITE-ProRule" id="PRU01182"/>
    </source>
</evidence>
<evidence type="ECO:0000256" key="3">
    <source>
        <dbReference type="SAM" id="MobiDB-lite"/>
    </source>
</evidence>
<feature type="chain" id="PRO_0000365180" description="Eukaryotic translation initiation factor 3 subunit H">
    <location>
        <begin position="1"/>
        <end position="335"/>
    </location>
</feature>
<feature type="domain" description="MPN" evidence="2">
    <location>
        <begin position="22"/>
        <end position="156"/>
    </location>
</feature>
<feature type="region of interest" description="Disordered" evidence="3">
    <location>
        <begin position="254"/>
        <end position="287"/>
    </location>
</feature>
<feature type="compositionally biased region" description="Low complexity" evidence="3">
    <location>
        <begin position="254"/>
        <end position="263"/>
    </location>
</feature>
<feature type="compositionally biased region" description="Polar residues" evidence="3">
    <location>
        <begin position="267"/>
        <end position="276"/>
    </location>
</feature>
<organism>
    <name type="scientific">Xenopus tropicalis</name>
    <name type="common">Western clawed frog</name>
    <name type="synonym">Silurana tropicalis</name>
    <dbReference type="NCBI Taxonomy" id="8364"/>
    <lineage>
        <taxon>Eukaryota</taxon>
        <taxon>Metazoa</taxon>
        <taxon>Chordata</taxon>
        <taxon>Craniata</taxon>
        <taxon>Vertebrata</taxon>
        <taxon>Euteleostomi</taxon>
        <taxon>Amphibia</taxon>
        <taxon>Batrachia</taxon>
        <taxon>Anura</taxon>
        <taxon>Pipoidea</taxon>
        <taxon>Pipidae</taxon>
        <taxon>Xenopodinae</taxon>
        <taxon>Xenopus</taxon>
        <taxon>Silurana</taxon>
    </lineage>
</organism>
<dbReference type="EMBL" id="BC064151">
    <property type="protein sequence ID" value="AAH64151.1"/>
    <property type="molecule type" value="mRNA"/>
</dbReference>
<dbReference type="RefSeq" id="NP_989359.1">
    <property type="nucleotide sequence ID" value="NM_204028.1"/>
</dbReference>
<dbReference type="SMR" id="Q6P381"/>
<dbReference type="FunCoup" id="Q6P381">
    <property type="interactions" value="2734"/>
</dbReference>
<dbReference type="STRING" id="8364.ENSXETP00000035384"/>
<dbReference type="MEROPS" id="M67.971"/>
<dbReference type="PaxDb" id="8364-ENSXETP00000016127"/>
<dbReference type="GeneID" id="394989"/>
<dbReference type="KEGG" id="xtr:394989"/>
<dbReference type="AGR" id="Xenbase:XB-GENE-958115"/>
<dbReference type="CTD" id="8667"/>
<dbReference type="Xenbase" id="XB-GENE-958115">
    <property type="gene designation" value="eif3h"/>
</dbReference>
<dbReference type="eggNOG" id="KOG1560">
    <property type="taxonomic scope" value="Eukaryota"/>
</dbReference>
<dbReference type="InParanoid" id="Q6P381"/>
<dbReference type="OMA" id="WYQSTYF"/>
<dbReference type="OrthoDB" id="10265695at2759"/>
<dbReference type="PhylomeDB" id="Q6P381"/>
<dbReference type="Reactome" id="R-XTR-156827">
    <property type="pathway name" value="L13a-mediated translational silencing of Ceruloplasmin expression"/>
</dbReference>
<dbReference type="Reactome" id="R-XTR-72689">
    <property type="pathway name" value="Formation of a pool of free 40S subunits"/>
</dbReference>
<dbReference type="Reactome" id="R-XTR-72695">
    <property type="pathway name" value="Formation of the ternary complex, and subsequently, the 43S complex"/>
</dbReference>
<dbReference type="Reactome" id="R-XTR-72702">
    <property type="pathway name" value="Ribosomal scanning and start codon recognition"/>
</dbReference>
<dbReference type="Proteomes" id="UP000008143">
    <property type="component" value="Chromosome 6"/>
</dbReference>
<dbReference type="GO" id="GO:0016282">
    <property type="term" value="C:eukaryotic 43S preinitiation complex"/>
    <property type="evidence" value="ECO:0007669"/>
    <property type="project" value="UniProtKB-UniRule"/>
</dbReference>
<dbReference type="GO" id="GO:0033290">
    <property type="term" value="C:eukaryotic 48S preinitiation complex"/>
    <property type="evidence" value="ECO:0007669"/>
    <property type="project" value="UniProtKB-UniRule"/>
</dbReference>
<dbReference type="GO" id="GO:0005852">
    <property type="term" value="C:eukaryotic translation initiation factor 3 complex"/>
    <property type="evidence" value="ECO:0000250"/>
    <property type="project" value="UniProtKB"/>
</dbReference>
<dbReference type="GO" id="GO:0008237">
    <property type="term" value="F:metallopeptidase activity"/>
    <property type="evidence" value="ECO:0007669"/>
    <property type="project" value="InterPro"/>
</dbReference>
<dbReference type="GO" id="GO:0003743">
    <property type="term" value="F:translation initiation factor activity"/>
    <property type="evidence" value="ECO:0007669"/>
    <property type="project" value="UniProtKB-UniRule"/>
</dbReference>
<dbReference type="GO" id="GO:0001732">
    <property type="term" value="P:formation of cytoplasmic translation initiation complex"/>
    <property type="evidence" value="ECO:0007669"/>
    <property type="project" value="UniProtKB-UniRule"/>
</dbReference>
<dbReference type="GO" id="GO:0006413">
    <property type="term" value="P:translational initiation"/>
    <property type="evidence" value="ECO:0000250"/>
    <property type="project" value="UniProtKB"/>
</dbReference>
<dbReference type="CDD" id="cd08065">
    <property type="entry name" value="MPN_eIF3h"/>
    <property type="match status" value="1"/>
</dbReference>
<dbReference type="FunFam" id="3.40.140.10:FF:000020">
    <property type="entry name" value="Eukaryotic translation initiation factor 3 subunit H"/>
    <property type="match status" value="1"/>
</dbReference>
<dbReference type="Gene3D" id="3.40.140.10">
    <property type="entry name" value="Cytidine Deaminase, domain 2"/>
    <property type="match status" value="1"/>
</dbReference>
<dbReference type="HAMAP" id="MF_03007">
    <property type="entry name" value="eIF3h"/>
    <property type="match status" value="1"/>
</dbReference>
<dbReference type="InterPro" id="IPR027524">
    <property type="entry name" value="eIF3h"/>
</dbReference>
<dbReference type="InterPro" id="IPR045810">
    <property type="entry name" value="eIF3h_C"/>
</dbReference>
<dbReference type="InterPro" id="IPR000555">
    <property type="entry name" value="JAMM/MPN+_dom"/>
</dbReference>
<dbReference type="InterPro" id="IPR050242">
    <property type="entry name" value="JAMM_MPN+_peptidase_M67A"/>
</dbReference>
<dbReference type="InterPro" id="IPR037518">
    <property type="entry name" value="MPN"/>
</dbReference>
<dbReference type="PANTHER" id="PTHR10410">
    <property type="entry name" value="EUKARYOTIC TRANSLATION INITIATION FACTOR 3 -RELATED"/>
    <property type="match status" value="1"/>
</dbReference>
<dbReference type="Pfam" id="PF19445">
    <property type="entry name" value="eIF3h_C"/>
    <property type="match status" value="1"/>
</dbReference>
<dbReference type="Pfam" id="PF01398">
    <property type="entry name" value="JAB"/>
    <property type="match status" value="1"/>
</dbReference>
<dbReference type="SMART" id="SM00232">
    <property type="entry name" value="JAB_MPN"/>
    <property type="match status" value="1"/>
</dbReference>
<dbReference type="PROSITE" id="PS50249">
    <property type="entry name" value="MPN"/>
    <property type="match status" value="1"/>
</dbReference>
<sequence length="335" mass="38538">MAARTRETGNTATVAETAVKQVQIDGMVVLKIIKHYQEEGHGSEVVQGVLLGLVVDDRLEITNCFPFPQHTEDDVDFDEVQYQMEMMRSLRHVNIDHLHVGWYQSTFYGTFVSRALLDSQFSYQHAIEESVVLIYDPIKTGQGSLSLKAYRLTPKLMEVCKEKDFSAEGLKKANIAFEDMFEEVPIIIKNSHLINVLAWELDKKAPVTEKHELLNLSSSNHLEKSLQLLMDRVDELSQDIVKYNTYLRNISKQQQQKHQYTQRRQQENLQRQSRGETSLPEEDVNKLFKPPVPPSRMDSLLIAGQINTYIQHIKEFTSQNLGKLFMAEAMQDPTI</sequence>
<comment type="function">
    <text evidence="1">Component of the eukaryotic translation initiation factor 3 (eIF-3) complex, which is involved in protein synthesis of a specialized repertoire of mRNAs and, together with other initiation factors, stimulates binding of mRNA and methionyl-tRNAi to the 40S ribosome. The eIF-3 complex specifically targets and initiates translation of a subset of mRNAs involved in cell proliferation.</text>
</comment>
<comment type="subunit">
    <text evidence="1">Component of the eukaryotic translation initiation factor 3 (eIF-3) complex, which is composed of 13 subunits: eif3a, eif3b, eif3c, eif3d, eif3e, eif3f, eif3g, eif3h, eif3i, eif3j, eif3k, eif3l and eif3m.</text>
</comment>
<comment type="subcellular location">
    <subcellularLocation>
        <location evidence="1">Cytoplasm</location>
    </subcellularLocation>
</comment>
<comment type="similarity">
    <text evidence="1">Belongs to the eIF-3 subunit H family.</text>
</comment>